<reference key="1">
    <citation type="journal article" date="2007" name="Genome Res.">
        <title>Genome characteristics of facultatively symbiotic Frankia sp. strains reflect host range and host plant biogeography.</title>
        <authorList>
            <person name="Normand P."/>
            <person name="Lapierre P."/>
            <person name="Tisa L.S."/>
            <person name="Gogarten J.P."/>
            <person name="Alloisio N."/>
            <person name="Bagnarol E."/>
            <person name="Bassi C.A."/>
            <person name="Berry A.M."/>
            <person name="Bickhart D.M."/>
            <person name="Choisne N."/>
            <person name="Couloux A."/>
            <person name="Cournoyer B."/>
            <person name="Cruveiller S."/>
            <person name="Daubin V."/>
            <person name="Demange N."/>
            <person name="Francino M.P."/>
            <person name="Goltsman E."/>
            <person name="Huang Y."/>
            <person name="Kopp O.R."/>
            <person name="Labarre L."/>
            <person name="Lapidus A."/>
            <person name="Lavire C."/>
            <person name="Marechal J."/>
            <person name="Martinez M."/>
            <person name="Mastronunzio J.E."/>
            <person name="Mullin B.C."/>
            <person name="Niemann J."/>
            <person name="Pujic P."/>
            <person name="Rawnsley T."/>
            <person name="Rouy Z."/>
            <person name="Schenowitz C."/>
            <person name="Sellstedt A."/>
            <person name="Tavares F."/>
            <person name="Tomkins J.P."/>
            <person name="Vallenet D."/>
            <person name="Valverde C."/>
            <person name="Wall L.G."/>
            <person name="Wang Y."/>
            <person name="Medigue C."/>
            <person name="Benson D.R."/>
        </authorList>
    </citation>
    <scope>NUCLEOTIDE SEQUENCE [LARGE SCALE GENOMIC DNA]</scope>
    <source>
        <strain>DSM 45818 / CECT 9043 / HFP020203 / CcI3</strain>
    </source>
</reference>
<comment type="catalytic activity">
    <reaction evidence="1">
        <text>1-(5-phospho-beta-D-ribosyl)-5-[(5-phospho-beta-D-ribosylamino)methylideneamino]imidazole-4-carboxamide = 5-[(5-phospho-1-deoxy-D-ribulos-1-ylimino)methylamino]-1-(5-phospho-beta-D-ribosyl)imidazole-4-carboxamide</text>
        <dbReference type="Rhea" id="RHEA:15469"/>
        <dbReference type="ChEBI" id="CHEBI:58435"/>
        <dbReference type="ChEBI" id="CHEBI:58525"/>
        <dbReference type="EC" id="5.3.1.16"/>
    </reaction>
</comment>
<comment type="pathway">
    <text evidence="1">Amino-acid biosynthesis; L-histidine biosynthesis; L-histidine from 5-phospho-alpha-D-ribose 1-diphosphate: step 4/9.</text>
</comment>
<comment type="subcellular location">
    <subcellularLocation>
        <location evidence="1">Cytoplasm</location>
    </subcellularLocation>
</comment>
<comment type="similarity">
    <text evidence="1">Belongs to the HisA/HisF family.</text>
</comment>
<organism>
    <name type="scientific">Frankia casuarinae (strain DSM 45818 / CECT 9043 / HFP020203 / CcI3)</name>
    <dbReference type="NCBI Taxonomy" id="106370"/>
    <lineage>
        <taxon>Bacteria</taxon>
        <taxon>Bacillati</taxon>
        <taxon>Actinomycetota</taxon>
        <taxon>Actinomycetes</taxon>
        <taxon>Frankiales</taxon>
        <taxon>Frankiaceae</taxon>
        <taxon>Frankia</taxon>
    </lineage>
</organism>
<keyword id="KW-0028">Amino-acid biosynthesis</keyword>
<keyword id="KW-0963">Cytoplasm</keyword>
<keyword id="KW-0368">Histidine biosynthesis</keyword>
<keyword id="KW-0413">Isomerase</keyword>
<keyword id="KW-1185">Reference proteome</keyword>
<evidence type="ECO:0000255" key="1">
    <source>
        <dbReference type="HAMAP-Rule" id="MF_01014"/>
    </source>
</evidence>
<accession>Q2J8L2</accession>
<feature type="chain" id="PRO_0000290476" description="1-(5-phosphoribosyl)-5-[(5-phosphoribosylamino)methylideneamino] imidazole-4-carboxamide isomerase">
    <location>
        <begin position="1"/>
        <end position="252"/>
    </location>
</feature>
<feature type="active site" description="Proton acceptor" evidence="1">
    <location>
        <position position="10"/>
    </location>
</feature>
<feature type="active site" description="Proton donor" evidence="1">
    <location>
        <position position="129"/>
    </location>
</feature>
<dbReference type="EC" id="5.3.1.16" evidence="1"/>
<dbReference type="EMBL" id="CP000249">
    <property type="protein sequence ID" value="ABD12380.1"/>
    <property type="molecule type" value="Genomic_DNA"/>
</dbReference>
<dbReference type="SMR" id="Q2J8L2"/>
<dbReference type="STRING" id="106370.Francci3_3023"/>
<dbReference type="KEGG" id="fra:Francci3_3023"/>
<dbReference type="eggNOG" id="COG0106">
    <property type="taxonomic scope" value="Bacteria"/>
</dbReference>
<dbReference type="HOGENOM" id="CLU_048577_1_1_11"/>
<dbReference type="OrthoDB" id="9807749at2"/>
<dbReference type="PhylomeDB" id="Q2J8L2"/>
<dbReference type="UniPathway" id="UPA00031">
    <property type="reaction ID" value="UER00009"/>
</dbReference>
<dbReference type="Proteomes" id="UP000001937">
    <property type="component" value="Chromosome"/>
</dbReference>
<dbReference type="GO" id="GO:0005737">
    <property type="term" value="C:cytoplasm"/>
    <property type="evidence" value="ECO:0007669"/>
    <property type="project" value="UniProtKB-SubCell"/>
</dbReference>
<dbReference type="GO" id="GO:0003949">
    <property type="term" value="F:1-(5-phosphoribosyl)-5-[(5-phosphoribosylamino)methylideneamino]imidazole-4-carboxamide isomerase activity"/>
    <property type="evidence" value="ECO:0007669"/>
    <property type="project" value="UniProtKB-UniRule"/>
</dbReference>
<dbReference type="GO" id="GO:0004640">
    <property type="term" value="F:phosphoribosylanthranilate isomerase activity"/>
    <property type="evidence" value="ECO:0007669"/>
    <property type="project" value="InterPro"/>
</dbReference>
<dbReference type="GO" id="GO:0000105">
    <property type="term" value="P:L-histidine biosynthetic process"/>
    <property type="evidence" value="ECO:0007669"/>
    <property type="project" value="UniProtKB-UniRule"/>
</dbReference>
<dbReference type="GO" id="GO:0000162">
    <property type="term" value="P:L-tryptophan biosynthetic process"/>
    <property type="evidence" value="ECO:0007669"/>
    <property type="project" value="InterPro"/>
</dbReference>
<dbReference type="CDD" id="cd04732">
    <property type="entry name" value="HisA"/>
    <property type="match status" value="1"/>
</dbReference>
<dbReference type="FunFam" id="3.20.20.70:FF:000009">
    <property type="entry name" value="1-(5-phosphoribosyl)-5-[(5-phosphoribosylamino)methylideneamino] imidazole-4-carboxamide isomerase"/>
    <property type="match status" value="1"/>
</dbReference>
<dbReference type="Gene3D" id="3.20.20.70">
    <property type="entry name" value="Aldolase class I"/>
    <property type="match status" value="1"/>
</dbReference>
<dbReference type="HAMAP" id="MF_01014">
    <property type="entry name" value="HisA"/>
    <property type="match status" value="1"/>
</dbReference>
<dbReference type="InterPro" id="IPR013785">
    <property type="entry name" value="Aldolase_TIM"/>
</dbReference>
<dbReference type="InterPro" id="IPR006062">
    <property type="entry name" value="His_biosynth"/>
</dbReference>
<dbReference type="InterPro" id="IPR010188">
    <property type="entry name" value="HisA/PriA_Actinobacteria"/>
</dbReference>
<dbReference type="InterPro" id="IPR044524">
    <property type="entry name" value="Isoase_HisA-like"/>
</dbReference>
<dbReference type="InterPro" id="IPR023016">
    <property type="entry name" value="Isoase_HisA-like_bact"/>
</dbReference>
<dbReference type="InterPro" id="IPR011060">
    <property type="entry name" value="RibuloseP-bd_barrel"/>
</dbReference>
<dbReference type="NCBIfam" id="TIGR01919">
    <property type="entry name" value="hisA-trpF"/>
    <property type="match status" value="1"/>
</dbReference>
<dbReference type="PANTHER" id="PTHR43090">
    <property type="entry name" value="1-(5-PHOSPHORIBOSYL)-5-[(5-PHOSPHORIBOSYLAMINO)METHYLIDENEAMINO] IMIDAZOLE-4-CARBOXAMIDE ISOMERASE"/>
    <property type="match status" value="1"/>
</dbReference>
<dbReference type="PANTHER" id="PTHR43090:SF2">
    <property type="entry name" value="1-(5-PHOSPHORIBOSYL)-5-[(5-PHOSPHORIBOSYLAMINO)METHYLIDENEAMINO] IMIDAZOLE-4-CARBOXAMIDE ISOMERASE"/>
    <property type="match status" value="1"/>
</dbReference>
<dbReference type="Pfam" id="PF00977">
    <property type="entry name" value="His_biosynth"/>
    <property type="match status" value="1"/>
</dbReference>
<dbReference type="SUPFAM" id="SSF51366">
    <property type="entry name" value="Ribulose-phoshate binding barrel"/>
    <property type="match status" value="1"/>
</dbReference>
<protein>
    <recommendedName>
        <fullName evidence="1">1-(5-phosphoribosyl)-5-[(5-phosphoribosylamino)methylideneamino] imidazole-4-carboxamide isomerase</fullName>
        <ecNumber evidence="1">5.3.1.16</ecNumber>
    </recommendedName>
    <alternativeName>
        <fullName evidence="1">Phosphoribosylformimino-5-aminoimidazole carboxamide ribotide isomerase</fullName>
    </alternativeName>
</protein>
<name>HIS4_FRACC</name>
<sequence>MTLTLLPAVDVADGRAVRLVQGEAGSETSYGDPREAALTWQRDGAEWIHLVDLDAAFGRGSNRELIAEVVRAVDVAVELSGGIRDDASLDAALATGAARVNIGTAALEDPDWVRRAIDRVGDRIAVGLDVRGTTLSARGWTRDGGELFDVLARLDADGCARYVVTDVRRDGTLTGPNVELLRSVTAATSRPVVASGGVATLDDLTAIAVVPGVEGAIIGKALYAGAFTLPEALAVAGNIGNIGNGCAGAVGR</sequence>
<gene>
    <name evidence="1" type="primary">hisA</name>
    <name type="ordered locus">Francci3_3023</name>
</gene>
<proteinExistence type="inferred from homology"/>